<gene>
    <name evidence="1" type="primary">ndk</name>
    <name type="ordered locus">Mvan_3948</name>
</gene>
<keyword id="KW-0067">ATP-binding</keyword>
<keyword id="KW-0963">Cytoplasm</keyword>
<keyword id="KW-0418">Kinase</keyword>
<keyword id="KW-0460">Magnesium</keyword>
<keyword id="KW-0479">Metal-binding</keyword>
<keyword id="KW-0546">Nucleotide metabolism</keyword>
<keyword id="KW-0547">Nucleotide-binding</keyword>
<keyword id="KW-0597">Phosphoprotein</keyword>
<keyword id="KW-0808">Transferase</keyword>
<accession>A1TC25</accession>
<proteinExistence type="inferred from homology"/>
<dbReference type="EC" id="2.7.4.6" evidence="1"/>
<dbReference type="EMBL" id="CP000511">
    <property type="protein sequence ID" value="ABM14725.1"/>
    <property type="molecule type" value="Genomic_DNA"/>
</dbReference>
<dbReference type="RefSeq" id="WP_011781105.1">
    <property type="nucleotide sequence ID" value="NZ_JACKSD010000018.1"/>
</dbReference>
<dbReference type="SMR" id="A1TC25"/>
<dbReference type="STRING" id="350058.Mvan_3948"/>
<dbReference type="KEGG" id="mva:Mvan_3948"/>
<dbReference type="eggNOG" id="COG0105">
    <property type="taxonomic scope" value="Bacteria"/>
</dbReference>
<dbReference type="HOGENOM" id="CLU_060216_6_3_11"/>
<dbReference type="Proteomes" id="UP000009159">
    <property type="component" value="Chromosome"/>
</dbReference>
<dbReference type="GO" id="GO:0005737">
    <property type="term" value="C:cytoplasm"/>
    <property type="evidence" value="ECO:0007669"/>
    <property type="project" value="UniProtKB-SubCell"/>
</dbReference>
<dbReference type="GO" id="GO:0005524">
    <property type="term" value="F:ATP binding"/>
    <property type="evidence" value="ECO:0007669"/>
    <property type="project" value="UniProtKB-UniRule"/>
</dbReference>
<dbReference type="GO" id="GO:0046872">
    <property type="term" value="F:metal ion binding"/>
    <property type="evidence" value="ECO:0007669"/>
    <property type="project" value="UniProtKB-KW"/>
</dbReference>
<dbReference type="GO" id="GO:0004550">
    <property type="term" value="F:nucleoside diphosphate kinase activity"/>
    <property type="evidence" value="ECO:0007669"/>
    <property type="project" value="UniProtKB-UniRule"/>
</dbReference>
<dbReference type="GO" id="GO:0006241">
    <property type="term" value="P:CTP biosynthetic process"/>
    <property type="evidence" value="ECO:0007669"/>
    <property type="project" value="UniProtKB-UniRule"/>
</dbReference>
<dbReference type="GO" id="GO:0006183">
    <property type="term" value="P:GTP biosynthetic process"/>
    <property type="evidence" value="ECO:0007669"/>
    <property type="project" value="UniProtKB-UniRule"/>
</dbReference>
<dbReference type="GO" id="GO:0006228">
    <property type="term" value="P:UTP biosynthetic process"/>
    <property type="evidence" value="ECO:0007669"/>
    <property type="project" value="UniProtKB-UniRule"/>
</dbReference>
<dbReference type="CDD" id="cd04413">
    <property type="entry name" value="NDPk_I"/>
    <property type="match status" value="1"/>
</dbReference>
<dbReference type="FunFam" id="3.30.70.141:FF:000003">
    <property type="entry name" value="Nucleoside diphosphate kinase"/>
    <property type="match status" value="1"/>
</dbReference>
<dbReference type="Gene3D" id="3.30.70.141">
    <property type="entry name" value="Nucleoside diphosphate kinase-like domain"/>
    <property type="match status" value="1"/>
</dbReference>
<dbReference type="HAMAP" id="MF_00451">
    <property type="entry name" value="NDP_kinase"/>
    <property type="match status" value="1"/>
</dbReference>
<dbReference type="InterPro" id="IPR034907">
    <property type="entry name" value="NDK-like_dom"/>
</dbReference>
<dbReference type="InterPro" id="IPR036850">
    <property type="entry name" value="NDK-like_dom_sf"/>
</dbReference>
<dbReference type="InterPro" id="IPR001564">
    <property type="entry name" value="Nucleoside_diP_kinase"/>
</dbReference>
<dbReference type="InterPro" id="IPR023005">
    <property type="entry name" value="Nucleoside_diP_kinase_AS"/>
</dbReference>
<dbReference type="NCBIfam" id="NF001908">
    <property type="entry name" value="PRK00668.1"/>
    <property type="match status" value="1"/>
</dbReference>
<dbReference type="PANTHER" id="PTHR11349">
    <property type="entry name" value="NUCLEOSIDE DIPHOSPHATE KINASE"/>
    <property type="match status" value="1"/>
</dbReference>
<dbReference type="Pfam" id="PF00334">
    <property type="entry name" value="NDK"/>
    <property type="match status" value="1"/>
</dbReference>
<dbReference type="PRINTS" id="PR01243">
    <property type="entry name" value="NUCDPKINASE"/>
</dbReference>
<dbReference type="SMART" id="SM00562">
    <property type="entry name" value="NDK"/>
    <property type="match status" value="1"/>
</dbReference>
<dbReference type="SUPFAM" id="SSF54919">
    <property type="entry name" value="Nucleoside diphosphate kinase, NDK"/>
    <property type="match status" value="1"/>
</dbReference>
<dbReference type="PROSITE" id="PS00469">
    <property type="entry name" value="NDPK"/>
    <property type="match status" value="1"/>
</dbReference>
<dbReference type="PROSITE" id="PS51374">
    <property type="entry name" value="NDPK_LIKE"/>
    <property type="match status" value="1"/>
</dbReference>
<organism>
    <name type="scientific">Mycolicibacterium vanbaalenii (strain DSM 7251 / JCM 13017 / BCRC 16820 / KCTC 9966 / NRRL B-24157 / PYR-1)</name>
    <name type="common">Mycobacterium vanbaalenii</name>
    <dbReference type="NCBI Taxonomy" id="350058"/>
    <lineage>
        <taxon>Bacteria</taxon>
        <taxon>Bacillati</taxon>
        <taxon>Actinomycetota</taxon>
        <taxon>Actinomycetes</taxon>
        <taxon>Mycobacteriales</taxon>
        <taxon>Mycobacteriaceae</taxon>
        <taxon>Mycolicibacterium</taxon>
    </lineage>
</organism>
<reference key="1">
    <citation type="submission" date="2006-12" db="EMBL/GenBank/DDBJ databases">
        <title>Complete sequence of Mycobacterium vanbaalenii PYR-1.</title>
        <authorList>
            <consortium name="US DOE Joint Genome Institute"/>
            <person name="Copeland A."/>
            <person name="Lucas S."/>
            <person name="Lapidus A."/>
            <person name="Barry K."/>
            <person name="Detter J.C."/>
            <person name="Glavina del Rio T."/>
            <person name="Hammon N."/>
            <person name="Israni S."/>
            <person name="Dalin E."/>
            <person name="Tice H."/>
            <person name="Pitluck S."/>
            <person name="Singan V."/>
            <person name="Schmutz J."/>
            <person name="Larimer F."/>
            <person name="Land M."/>
            <person name="Hauser L."/>
            <person name="Kyrpides N."/>
            <person name="Anderson I.J."/>
            <person name="Miller C."/>
            <person name="Richardson P."/>
        </authorList>
    </citation>
    <scope>NUCLEOTIDE SEQUENCE [LARGE SCALE GENOMIC DNA]</scope>
    <source>
        <strain>DSM 7251 / JCM 13017 / BCRC 16820 / KCTC 9966 / NRRL B-24157 / PYR-1</strain>
    </source>
</reference>
<sequence>MTERTLVLIKPDGVQRRLIGEIISRIEAKGLTVAALELKNVDDALARAHYAEHEGKPFFASLLEFITSGPVVAAILEGPRAIAAFRQLAGGTDPVEKATPGTIRGDLGLETQFNLVHGSDSPDSAAREIELWFPGR</sequence>
<protein>
    <recommendedName>
        <fullName evidence="1">Nucleoside diphosphate kinase</fullName>
        <shortName evidence="1">NDK</shortName>
        <shortName evidence="1">NDP kinase</shortName>
        <ecNumber evidence="1">2.7.4.6</ecNumber>
    </recommendedName>
    <alternativeName>
        <fullName evidence="1">Nucleoside-2-P kinase</fullName>
    </alternativeName>
</protein>
<comment type="function">
    <text evidence="1">Major role in the synthesis of nucleoside triphosphates other than ATP. The ATP gamma phosphate is transferred to the NDP beta phosphate via a ping-pong mechanism, using a phosphorylated active-site intermediate.</text>
</comment>
<comment type="catalytic activity">
    <reaction evidence="1">
        <text>a 2'-deoxyribonucleoside 5'-diphosphate + ATP = a 2'-deoxyribonucleoside 5'-triphosphate + ADP</text>
        <dbReference type="Rhea" id="RHEA:44640"/>
        <dbReference type="ChEBI" id="CHEBI:30616"/>
        <dbReference type="ChEBI" id="CHEBI:61560"/>
        <dbReference type="ChEBI" id="CHEBI:73316"/>
        <dbReference type="ChEBI" id="CHEBI:456216"/>
        <dbReference type="EC" id="2.7.4.6"/>
    </reaction>
</comment>
<comment type="catalytic activity">
    <reaction evidence="1">
        <text>a ribonucleoside 5'-diphosphate + ATP = a ribonucleoside 5'-triphosphate + ADP</text>
        <dbReference type="Rhea" id="RHEA:18113"/>
        <dbReference type="ChEBI" id="CHEBI:30616"/>
        <dbReference type="ChEBI" id="CHEBI:57930"/>
        <dbReference type="ChEBI" id="CHEBI:61557"/>
        <dbReference type="ChEBI" id="CHEBI:456216"/>
        <dbReference type="EC" id="2.7.4.6"/>
    </reaction>
</comment>
<comment type="cofactor">
    <cofactor evidence="1">
        <name>Mg(2+)</name>
        <dbReference type="ChEBI" id="CHEBI:18420"/>
    </cofactor>
</comment>
<comment type="subunit">
    <text evidence="1">Homotetramer.</text>
</comment>
<comment type="subcellular location">
    <subcellularLocation>
        <location evidence="1">Cytoplasm</location>
    </subcellularLocation>
</comment>
<comment type="similarity">
    <text evidence="1">Belongs to the NDK family.</text>
</comment>
<name>NDK_MYCVP</name>
<feature type="chain" id="PRO_1000026258" description="Nucleoside diphosphate kinase">
    <location>
        <begin position="1"/>
        <end position="136"/>
    </location>
</feature>
<feature type="active site" description="Pros-phosphohistidine intermediate" evidence="1">
    <location>
        <position position="117"/>
    </location>
</feature>
<feature type="binding site" evidence="1">
    <location>
        <position position="10"/>
    </location>
    <ligand>
        <name>ATP</name>
        <dbReference type="ChEBI" id="CHEBI:30616"/>
    </ligand>
</feature>
<feature type="binding site" evidence="1">
    <location>
        <position position="58"/>
    </location>
    <ligand>
        <name>ATP</name>
        <dbReference type="ChEBI" id="CHEBI:30616"/>
    </ligand>
</feature>
<feature type="binding site" evidence="1">
    <location>
        <position position="86"/>
    </location>
    <ligand>
        <name>ATP</name>
        <dbReference type="ChEBI" id="CHEBI:30616"/>
    </ligand>
</feature>
<feature type="binding site" evidence="1">
    <location>
        <position position="92"/>
    </location>
    <ligand>
        <name>ATP</name>
        <dbReference type="ChEBI" id="CHEBI:30616"/>
    </ligand>
</feature>
<feature type="binding site" evidence="1">
    <location>
        <position position="104"/>
    </location>
    <ligand>
        <name>ATP</name>
        <dbReference type="ChEBI" id="CHEBI:30616"/>
    </ligand>
</feature>
<feature type="binding site" evidence="1">
    <location>
        <position position="114"/>
    </location>
    <ligand>
        <name>ATP</name>
        <dbReference type="ChEBI" id="CHEBI:30616"/>
    </ligand>
</feature>
<evidence type="ECO:0000255" key="1">
    <source>
        <dbReference type="HAMAP-Rule" id="MF_00451"/>
    </source>
</evidence>